<comment type="miscellaneous">
    <text evidence="1">Partially overlaps APC1.</text>
</comment>
<comment type="caution">
    <text evidence="2">Product of a dubious gene prediction unlikely to encode a functional protein. Because of that it is not part of the S.cerevisiae S288c complete/reference proteome set.</text>
</comment>
<gene>
    <name type="ordered locus">YNL171C</name>
    <name type="ORF">N1684</name>
</gene>
<reference key="1">
    <citation type="journal article" date="1997" name="Nature">
        <title>The nucleotide sequence of Saccharomyces cerevisiae chromosome XIV and its evolutionary implications.</title>
        <authorList>
            <person name="Philippsen P."/>
            <person name="Kleine K."/>
            <person name="Poehlmann R."/>
            <person name="Duesterhoeft A."/>
            <person name="Hamberg K."/>
            <person name="Hegemann J.H."/>
            <person name="Obermaier B."/>
            <person name="Urrestarazu L.A."/>
            <person name="Aert R."/>
            <person name="Albermann K."/>
            <person name="Altmann R."/>
            <person name="Andre B."/>
            <person name="Baladron V."/>
            <person name="Ballesta J.P.G."/>
            <person name="Becam A.-M."/>
            <person name="Beinhauer J.D."/>
            <person name="Boskovic J."/>
            <person name="Buitrago M.J."/>
            <person name="Bussereau F."/>
            <person name="Coster F."/>
            <person name="Crouzet M."/>
            <person name="D'Angelo M."/>
            <person name="Dal Pero F."/>
            <person name="De Antoni A."/>
            <person name="del Rey F."/>
            <person name="Doignon F."/>
            <person name="Domdey H."/>
            <person name="Dubois E."/>
            <person name="Fiedler T.A."/>
            <person name="Fleig U."/>
            <person name="Floeth M."/>
            <person name="Fritz C."/>
            <person name="Gaillardin C."/>
            <person name="Garcia-Cantalejo J.M."/>
            <person name="Glansdorff N."/>
            <person name="Goffeau A."/>
            <person name="Gueldener U."/>
            <person name="Herbert C.J."/>
            <person name="Heumann K."/>
            <person name="Heuss-Neitzel D."/>
            <person name="Hilbert H."/>
            <person name="Hinni K."/>
            <person name="Iraqui Houssaini I."/>
            <person name="Jacquet M."/>
            <person name="Jimenez A."/>
            <person name="Jonniaux J.-L."/>
            <person name="Karpfinger-Hartl L."/>
            <person name="Lanfranchi G."/>
            <person name="Lepingle A."/>
            <person name="Levesque H."/>
            <person name="Lyck R."/>
            <person name="Maftahi M."/>
            <person name="Mallet L."/>
            <person name="Maurer C.T.C."/>
            <person name="Messenguy F."/>
            <person name="Mewes H.-W."/>
            <person name="Moestl D."/>
            <person name="Nasr F."/>
            <person name="Nicaud J.-M."/>
            <person name="Niedenthal R.K."/>
            <person name="Pandolfo D."/>
            <person name="Pierard A."/>
            <person name="Piravandi E."/>
            <person name="Planta R.J."/>
            <person name="Pohl T.M."/>
            <person name="Purnelle B."/>
            <person name="Rebischung C."/>
            <person name="Remacha M.A."/>
            <person name="Revuelta J.L."/>
            <person name="Rinke M."/>
            <person name="Saiz J.E."/>
            <person name="Sartorello F."/>
            <person name="Scherens B."/>
            <person name="Sen-Gupta M."/>
            <person name="Soler-Mira A."/>
            <person name="Urbanus J.H.M."/>
            <person name="Valle G."/>
            <person name="Van Dyck L."/>
            <person name="Verhasselt P."/>
            <person name="Vierendeels F."/>
            <person name="Vissers S."/>
            <person name="Voet M."/>
            <person name="Volckaert G."/>
            <person name="Wach A."/>
            <person name="Wambutt R."/>
            <person name="Wedler H."/>
            <person name="Zollner A."/>
            <person name="Hani J."/>
        </authorList>
    </citation>
    <scope>NUCLEOTIDE SEQUENCE [LARGE SCALE GENOMIC DNA]</scope>
    <source>
        <strain>ATCC 204508 / S288c</strain>
    </source>
</reference>
<reference key="2">
    <citation type="journal article" date="2014" name="G3 (Bethesda)">
        <title>The reference genome sequence of Saccharomyces cerevisiae: Then and now.</title>
        <authorList>
            <person name="Engel S.R."/>
            <person name="Dietrich F.S."/>
            <person name="Fisk D.G."/>
            <person name="Binkley G."/>
            <person name="Balakrishnan R."/>
            <person name="Costanzo M.C."/>
            <person name="Dwight S.S."/>
            <person name="Hitz B.C."/>
            <person name="Karra K."/>
            <person name="Nash R.S."/>
            <person name="Weng S."/>
            <person name="Wong E.D."/>
            <person name="Lloyd P."/>
            <person name="Skrzypek M.S."/>
            <person name="Miyasato S.R."/>
            <person name="Simison M."/>
            <person name="Cherry J.M."/>
        </authorList>
    </citation>
    <scope>GENOME REANNOTATION</scope>
    <source>
        <strain>ATCC 204508 / S288c</strain>
    </source>
</reference>
<accession>P53887</accession>
<protein>
    <recommendedName>
        <fullName>Putative uncharacterized protein YNL171C</fullName>
    </recommendedName>
</protein>
<dbReference type="EMBL" id="Z71448">
    <property type="protein sequence ID" value="CAA96061.1"/>
    <property type="molecule type" value="Genomic_DNA"/>
</dbReference>
<dbReference type="PIR" id="S63126">
    <property type="entry name" value="S63126"/>
</dbReference>
<dbReference type="DIP" id="DIP-2013N"/>
<dbReference type="IntAct" id="P53887">
    <property type="interactions" value="2"/>
</dbReference>
<dbReference type="MINT" id="P53887"/>
<dbReference type="STRING" id="4932.YNL171C"/>
<dbReference type="PaxDb" id="4932-YNL171C"/>
<dbReference type="EnsemblFungi" id="YNL171C_mRNA">
    <property type="protein sequence ID" value="YNL171C"/>
    <property type="gene ID" value="YNL171C"/>
</dbReference>
<dbReference type="AGR" id="SGD:S000005115"/>
<dbReference type="SGD" id="S000005115">
    <property type="gene designation" value="YNL171C"/>
</dbReference>
<dbReference type="HOGENOM" id="CLU_2028525_0_0_1"/>
<evidence type="ECO:0000305" key="1"/>
<evidence type="ECO:0000305" key="2">
    <source>
    </source>
</evidence>
<proteinExistence type="uncertain"/>
<feature type="chain" id="PRO_0000203409" description="Putative uncharacterized protein YNL171C">
    <location>
        <begin position="1"/>
        <end position="122"/>
    </location>
</feature>
<sequence>MSCTPFINQVIHKDYTLPQFWNLLKLVLDTQINILEFCIIHHVVQSFCTTIRVGNPKYLHCFYLNTANLNYKILNPLMLYYFLHSKEYRVPPLSNLEYPNFQPVAKRWYFLVHFLGLILNNF</sequence>
<name>YNR1_YEAST</name>
<organism>
    <name type="scientific">Saccharomyces cerevisiae (strain ATCC 204508 / S288c)</name>
    <name type="common">Baker's yeast</name>
    <dbReference type="NCBI Taxonomy" id="559292"/>
    <lineage>
        <taxon>Eukaryota</taxon>
        <taxon>Fungi</taxon>
        <taxon>Dikarya</taxon>
        <taxon>Ascomycota</taxon>
        <taxon>Saccharomycotina</taxon>
        <taxon>Saccharomycetes</taxon>
        <taxon>Saccharomycetales</taxon>
        <taxon>Saccharomycetaceae</taxon>
        <taxon>Saccharomyces</taxon>
    </lineage>
</organism>